<comment type="function">
    <text evidence="1">F(1)F(0) ATP synthase produces ATP from ADP in the presence of a proton or sodium gradient. F-type ATPases consist of two structural domains, F(1) containing the extramembraneous catalytic core and F(0) containing the membrane proton channel, linked together by a central stalk and a peripheral stalk. During catalysis, ATP synthesis in the catalytic domain of F(1) is coupled via a rotary mechanism of the central stalk subunits to proton translocation.</text>
</comment>
<comment type="function">
    <text evidence="1">This protein is part of the stalk that links CF(0) to CF(1). It either transmits conformational changes from CF(0) to CF(1) or is implicated in proton conduction.</text>
</comment>
<comment type="subunit">
    <text evidence="1">F-type ATPases have 2 components, F(1) - the catalytic core - and F(0) - the membrane proton channel. F(1) has five subunits: alpha(3), beta(3), gamma(1), delta(1), epsilon(1). F(0) has three main subunits: a(1), b(2) and c(10-14). The alpha and beta chains form an alternating ring which encloses part of the gamma chain. F(1) is attached to F(0) by a central stalk formed by the gamma and epsilon chains, while a peripheral stalk is formed by the delta and b chains.</text>
</comment>
<comment type="subcellular location">
    <subcellularLocation>
        <location evidence="1">Cell membrane</location>
        <topology evidence="1">Peripheral membrane protein</topology>
    </subcellularLocation>
</comment>
<comment type="similarity">
    <text evidence="1">Belongs to the ATPase delta chain family.</text>
</comment>
<evidence type="ECO:0000255" key="1">
    <source>
        <dbReference type="HAMAP-Rule" id="MF_01416"/>
    </source>
</evidence>
<proteinExistence type="inferred from homology"/>
<gene>
    <name evidence="1" type="primary">atpH</name>
    <name type="ordered locus">Lreu_0464</name>
</gene>
<sequence length="180" mass="20468">MSLDKKTVADRYAKALFELVDADNELDQTYQELIALRQVFEDNEGLDAALAGVQLSLDEKKSLIKDLQQGASKYVANLIQMVFDYGRIDCMVAIIDEFERRYDRKMKRMHADVTTAIQLDKQQEDQLKANLAKRFGANEVTLTKHVDPEILGGVIVHVDNKTLDGSLSSKIKQIRRLLVR</sequence>
<feature type="chain" id="PRO_0000371011" description="ATP synthase subunit delta">
    <location>
        <begin position="1"/>
        <end position="180"/>
    </location>
</feature>
<keyword id="KW-0066">ATP synthesis</keyword>
<keyword id="KW-1003">Cell membrane</keyword>
<keyword id="KW-0139">CF(1)</keyword>
<keyword id="KW-0375">Hydrogen ion transport</keyword>
<keyword id="KW-0406">Ion transport</keyword>
<keyword id="KW-0472">Membrane</keyword>
<keyword id="KW-1185">Reference proteome</keyword>
<keyword id="KW-0813">Transport</keyword>
<dbReference type="EMBL" id="CP000705">
    <property type="protein sequence ID" value="ABQ82732.1"/>
    <property type="molecule type" value="Genomic_DNA"/>
</dbReference>
<dbReference type="RefSeq" id="WP_003667559.1">
    <property type="nucleotide sequence ID" value="NZ_AZDD01000022.1"/>
</dbReference>
<dbReference type="SMR" id="A5VIQ8"/>
<dbReference type="STRING" id="557436.Lreu_0464"/>
<dbReference type="GeneID" id="77192081"/>
<dbReference type="KEGG" id="lre:Lreu_0464"/>
<dbReference type="PATRIC" id="fig|557436.17.peg.844"/>
<dbReference type="eggNOG" id="COG0712">
    <property type="taxonomic scope" value="Bacteria"/>
</dbReference>
<dbReference type="HOGENOM" id="CLU_085114_4_1_9"/>
<dbReference type="OMA" id="MVDNIQD"/>
<dbReference type="Proteomes" id="UP000001991">
    <property type="component" value="Chromosome"/>
</dbReference>
<dbReference type="GO" id="GO:0005886">
    <property type="term" value="C:plasma membrane"/>
    <property type="evidence" value="ECO:0007669"/>
    <property type="project" value="UniProtKB-SubCell"/>
</dbReference>
<dbReference type="GO" id="GO:0045259">
    <property type="term" value="C:proton-transporting ATP synthase complex"/>
    <property type="evidence" value="ECO:0007669"/>
    <property type="project" value="UniProtKB-KW"/>
</dbReference>
<dbReference type="GO" id="GO:0046933">
    <property type="term" value="F:proton-transporting ATP synthase activity, rotational mechanism"/>
    <property type="evidence" value="ECO:0007669"/>
    <property type="project" value="UniProtKB-UniRule"/>
</dbReference>
<dbReference type="Gene3D" id="1.10.520.20">
    <property type="entry name" value="N-terminal domain of the delta subunit of the F1F0-ATP synthase"/>
    <property type="match status" value="1"/>
</dbReference>
<dbReference type="HAMAP" id="MF_01416">
    <property type="entry name" value="ATP_synth_delta_bact"/>
    <property type="match status" value="1"/>
</dbReference>
<dbReference type="InterPro" id="IPR026015">
    <property type="entry name" value="ATP_synth_OSCP/delta_N_sf"/>
</dbReference>
<dbReference type="InterPro" id="IPR000711">
    <property type="entry name" value="ATPase_OSCP/dsu"/>
</dbReference>
<dbReference type="NCBIfam" id="TIGR01145">
    <property type="entry name" value="ATP_synt_delta"/>
    <property type="match status" value="1"/>
</dbReference>
<dbReference type="PANTHER" id="PTHR11910">
    <property type="entry name" value="ATP SYNTHASE DELTA CHAIN"/>
    <property type="match status" value="1"/>
</dbReference>
<dbReference type="Pfam" id="PF00213">
    <property type="entry name" value="OSCP"/>
    <property type="match status" value="1"/>
</dbReference>
<dbReference type="PRINTS" id="PR00125">
    <property type="entry name" value="ATPASEDELTA"/>
</dbReference>
<dbReference type="SUPFAM" id="SSF47928">
    <property type="entry name" value="N-terminal domain of the delta subunit of the F1F0-ATP synthase"/>
    <property type="match status" value="1"/>
</dbReference>
<protein>
    <recommendedName>
        <fullName evidence="1">ATP synthase subunit delta</fullName>
    </recommendedName>
    <alternativeName>
        <fullName evidence="1">ATP synthase F(1) sector subunit delta</fullName>
    </alternativeName>
    <alternativeName>
        <fullName evidence="1">F-type ATPase subunit delta</fullName>
        <shortName evidence="1">F-ATPase subunit delta</shortName>
    </alternativeName>
</protein>
<name>ATPD_LIMRD</name>
<accession>A5VIQ8</accession>
<organism>
    <name type="scientific">Limosilactobacillus reuteri (strain DSM 20016)</name>
    <name type="common">Lactobacillus reuteri</name>
    <dbReference type="NCBI Taxonomy" id="557436"/>
    <lineage>
        <taxon>Bacteria</taxon>
        <taxon>Bacillati</taxon>
        <taxon>Bacillota</taxon>
        <taxon>Bacilli</taxon>
        <taxon>Lactobacillales</taxon>
        <taxon>Lactobacillaceae</taxon>
        <taxon>Limosilactobacillus</taxon>
    </lineage>
</organism>
<reference key="1">
    <citation type="journal article" date="2011" name="PLoS Genet.">
        <title>The evolution of host specialization in the vertebrate gut symbiont Lactobacillus reuteri.</title>
        <authorList>
            <person name="Frese S.A."/>
            <person name="Benson A.K."/>
            <person name="Tannock G.W."/>
            <person name="Loach D.M."/>
            <person name="Kim J."/>
            <person name="Zhang M."/>
            <person name="Oh P.L."/>
            <person name="Heng N.C."/>
            <person name="Patil P.B."/>
            <person name="Juge N."/>
            <person name="Mackenzie D.A."/>
            <person name="Pearson B.M."/>
            <person name="Lapidus A."/>
            <person name="Dalin E."/>
            <person name="Tice H."/>
            <person name="Goltsman E."/>
            <person name="Land M."/>
            <person name="Hauser L."/>
            <person name="Ivanova N."/>
            <person name="Kyrpides N.C."/>
            <person name="Walter J."/>
        </authorList>
    </citation>
    <scope>NUCLEOTIDE SEQUENCE [LARGE SCALE GENOMIC DNA]</scope>
    <source>
        <strain>DSM 20016</strain>
    </source>
</reference>